<sequence>MNALEITQKLISYPTITPKECGIFEYIKSLFPAFKTLECGENGVKNLFLYRIFNSPKEHAEKEHAKEKHAKENVKPLHFCFAGHIDVVPPGDNWQSDPFKPIIKEGFLYGRGAQDMKGGVGAFLSASLNFNPKTPFLLSILLTSDEEGPGIFGTRLMLEKLKEKNLLPHMAIVAEPTCEKVLGDSIKIGRRGSINGKLILKGVQGHVAYPKKCQNPIDALASVLPLISGVHLDDGDEYFDPSKLVITNLHAGLGANNVTPGSVEITFNARHSLKTTKESLKEYLEKVLKDLPHTLELESSSSPFITTSHSKLTSVLKENILKTCRTTPLLNTKGGTSDARFFSAHGIEVVEFGAINDRIHAIDERVSLKELELLEKVFLGVLEDLSEK</sequence>
<comment type="function">
    <text evidence="1">Catalyzes the hydrolysis of N-succinyl-L,L-diaminopimelic acid (SDAP), forming succinate and LL-2,6-diaminopimelate (DAP), an intermediate involved in the bacterial biosynthesis of lysine and meso-diaminopimelic acid, an essential component of bacterial cell walls.</text>
</comment>
<comment type="catalytic activity">
    <reaction evidence="1">
        <text>N-succinyl-(2S,6S)-2,6-diaminopimelate + H2O = (2S,6S)-2,6-diaminopimelate + succinate</text>
        <dbReference type="Rhea" id="RHEA:22608"/>
        <dbReference type="ChEBI" id="CHEBI:15377"/>
        <dbReference type="ChEBI" id="CHEBI:30031"/>
        <dbReference type="ChEBI" id="CHEBI:57609"/>
        <dbReference type="ChEBI" id="CHEBI:58087"/>
        <dbReference type="EC" id="3.5.1.18"/>
    </reaction>
</comment>
<comment type="cofactor">
    <cofactor evidence="1">
        <name>Zn(2+)</name>
        <dbReference type="ChEBI" id="CHEBI:29105"/>
    </cofactor>
    <cofactor evidence="1">
        <name>Co(2+)</name>
        <dbReference type="ChEBI" id="CHEBI:48828"/>
    </cofactor>
    <text evidence="1">Binds 2 Zn(2+) or Co(2+) ions per subunit.</text>
</comment>
<comment type="pathway">
    <text evidence="1">Amino-acid biosynthesis; L-lysine biosynthesis via DAP pathway; LL-2,6-diaminopimelate from (S)-tetrahydrodipicolinate (succinylase route): step 3/3.</text>
</comment>
<comment type="subunit">
    <text evidence="1">Homodimer.</text>
</comment>
<comment type="similarity">
    <text evidence="1">Belongs to the peptidase M20A family. DapE subfamily.</text>
</comment>
<evidence type="ECO:0000255" key="1">
    <source>
        <dbReference type="HAMAP-Rule" id="MF_01690"/>
    </source>
</evidence>
<dbReference type="EC" id="3.5.1.18" evidence="1"/>
<dbReference type="EMBL" id="CP001173">
    <property type="protein sequence ID" value="ACI26961.1"/>
    <property type="molecule type" value="Genomic_DNA"/>
</dbReference>
<dbReference type="RefSeq" id="WP_000992405.1">
    <property type="nucleotide sequence ID" value="NC_011333.1"/>
</dbReference>
<dbReference type="SMR" id="B5Z9Y1"/>
<dbReference type="KEGG" id="hpg:HPG27_194"/>
<dbReference type="HOGENOM" id="CLU_021802_4_0_7"/>
<dbReference type="UniPathway" id="UPA00034">
    <property type="reaction ID" value="UER00021"/>
</dbReference>
<dbReference type="Proteomes" id="UP000001735">
    <property type="component" value="Chromosome"/>
</dbReference>
<dbReference type="GO" id="GO:0008777">
    <property type="term" value="F:acetylornithine deacetylase activity"/>
    <property type="evidence" value="ECO:0007669"/>
    <property type="project" value="TreeGrafter"/>
</dbReference>
<dbReference type="GO" id="GO:0046872">
    <property type="term" value="F:metal ion binding"/>
    <property type="evidence" value="ECO:0007669"/>
    <property type="project" value="UniProtKB-KW"/>
</dbReference>
<dbReference type="GO" id="GO:0009014">
    <property type="term" value="F:succinyl-diaminopimelate desuccinylase activity"/>
    <property type="evidence" value="ECO:0007669"/>
    <property type="project" value="UniProtKB-EC"/>
</dbReference>
<dbReference type="GO" id="GO:0019877">
    <property type="term" value="P:diaminopimelate biosynthetic process"/>
    <property type="evidence" value="ECO:0007669"/>
    <property type="project" value="UniProtKB-KW"/>
</dbReference>
<dbReference type="GO" id="GO:0006526">
    <property type="term" value="P:L-arginine biosynthetic process"/>
    <property type="evidence" value="ECO:0007669"/>
    <property type="project" value="TreeGrafter"/>
</dbReference>
<dbReference type="GO" id="GO:0009089">
    <property type="term" value="P:lysine biosynthetic process via diaminopimelate"/>
    <property type="evidence" value="ECO:0007669"/>
    <property type="project" value="UniProtKB-UniPathway"/>
</dbReference>
<dbReference type="CDD" id="cd03891">
    <property type="entry name" value="M20_DapE_proteobac"/>
    <property type="match status" value="1"/>
</dbReference>
<dbReference type="FunFam" id="3.30.70.360:FF:000011">
    <property type="entry name" value="Succinyl-diaminopimelate desuccinylase"/>
    <property type="match status" value="1"/>
</dbReference>
<dbReference type="FunFam" id="3.40.630.10:FF:000126">
    <property type="entry name" value="Succinyl-diaminopimelate desuccinylase"/>
    <property type="match status" value="1"/>
</dbReference>
<dbReference type="Gene3D" id="3.40.630.10">
    <property type="entry name" value="Zn peptidases"/>
    <property type="match status" value="2"/>
</dbReference>
<dbReference type="HAMAP" id="MF_01690">
    <property type="entry name" value="DapE"/>
    <property type="match status" value="1"/>
</dbReference>
<dbReference type="InterPro" id="IPR001261">
    <property type="entry name" value="ArgE/DapE_CS"/>
</dbReference>
<dbReference type="InterPro" id="IPR036264">
    <property type="entry name" value="Bact_exopeptidase_dim_dom"/>
</dbReference>
<dbReference type="InterPro" id="IPR005941">
    <property type="entry name" value="DapE_proteobac"/>
</dbReference>
<dbReference type="InterPro" id="IPR002933">
    <property type="entry name" value="Peptidase_M20"/>
</dbReference>
<dbReference type="InterPro" id="IPR011650">
    <property type="entry name" value="Peptidase_M20_dimer"/>
</dbReference>
<dbReference type="InterPro" id="IPR050072">
    <property type="entry name" value="Peptidase_M20A"/>
</dbReference>
<dbReference type="NCBIfam" id="TIGR01246">
    <property type="entry name" value="dapE_proteo"/>
    <property type="match status" value="1"/>
</dbReference>
<dbReference type="NCBIfam" id="NF009557">
    <property type="entry name" value="PRK13009.1"/>
    <property type="match status" value="1"/>
</dbReference>
<dbReference type="PANTHER" id="PTHR43808">
    <property type="entry name" value="ACETYLORNITHINE DEACETYLASE"/>
    <property type="match status" value="1"/>
</dbReference>
<dbReference type="PANTHER" id="PTHR43808:SF31">
    <property type="entry name" value="N-ACETYL-L-CITRULLINE DEACETYLASE"/>
    <property type="match status" value="1"/>
</dbReference>
<dbReference type="Pfam" id="PF07687">
    <property type="entry name" value="M20_dimer"/>
    <property type="match status" value="1"/>
</dbReference>
<dbReference type="Pfam" id="PF01546">
    <property type="entry name" value="Peptidase_M20"/>
    <property type="match status" value="1"/>
</dbReference>
<dbReference type="SUPFAM" id="SSF55031">
    <property type="entry name" value="Bacterial exopeptidase dimerisation domain"/>
    <property type="match status" value="1"/>
</dbReference>
<dbReference type="SUPFAM" id="SSF53187">
    <property type="entry name" value="Zn-dependent exopeptidases"/>
    <property type="match status" value="1"/>
</dbReference>
<dbReference type="PROSITE" id="PS00759">
    <property type="entry name" value="ARGE_DAPE_CPG2_2"/>
    <property type="match status" value="1"/>
</dbReference>
<reference key="1">
    <citation type="journal article" date="2009" name="J. Bacteriol.">
        <title>The complete genome sequence of Helicobacter pylori strain G27.</title>
        <authorList>
            <person name="Baltrus D.A."/>
            <person name="Amieva M.R."/>
            <person name="Covacci A."/>
            <person name="Lowe T.M."/>
            <person name="Merrell D.S."/>
            <person name="Ottemann K.M."/>
            <person name="Stein M."/>
            <person name="Salama N.R."/>
            <person name="Guillemin K."/>
        </authorList>
    </citation>
    <scope>NUCLEOTIDE SEQUENCE [LARGE SCALE GENOMIC DNA]</scope>
    <source>
        <strain>G27</strain>
    </source>
</reference>
<feature type="chain" id="PRO_0000375587" description="Succinyl-diaminopimelate desuccinylase">
    <location>
        <begin position="1"/>
        <end position="388"/>
    </location>
</feature>
<feature type="active site" evidence="1">
    <location>
        <position position="86"/>
    </location>
</feature>
<feature type="active site" description="Proton acceptor" evidence="1">
    <location>
        <position position="146"/>
    </location>
</feature>
<feature type="binding site" evidence="1">
    <location>
        <position position="84"/>
    </location>
    <ligand>
        <name>Zn(2+)</name>
        <dbReference type="ChEBI" id="CHEBI:29105"/>
        <label>1</label>
    </ligand>
</feature>
<feature type="binding site" evidence="1">
    <location>
        <position position="115"/>
    </location>
    <ligand>
        <name>Zn(2+)</name>
        <dbReference type="ChEBI" id="CHEBI:29105"/>
        <label>1</label>
    </ligand>
</feature>
<feature type="binding site" evidence="1">
    <location>
        <position position="115"/>
    </location>
    <ligand>
        <name>Zn(2+)</name>
        <dbReference type="ChEBI" id="CHEBI:29105"/>
        <label>2</label>
    </ligand>
</feature>
<feature type="binding site" evidence="1">
    <location>
        <position position="147"/>
    </location>
    <ligand>
        <name>Zn(2+)</name>
        <dbReference type="ChEBI" id="CHEBI:29105"/>
        <label>2</label>
    </ligand>
</feature>
<feature type="binding site" evidence="1">
    <location>
        <position position="175"/>
    </location>
    <ligand>
        <name>Zn(2+)</name>
        <dbReference type="ChEBI" id="CHEBI:29105"/>
        <label>1</label>
    </ligand>
</feature>
<feature type="binding site" evidence="1">
    <location>
        <position position="360"/>
    </location>
    <ligand>
        <name>Zn(2+)</name>
        <dbReference type="ChEBI" id="CHEBI:29105"/>
        <label>2</label>
    </ligand>
</feature>
<keyword id="KW-0028">Amino-acid biosynthesis</keyword>
<keyword id="KW-0170">Cobalt</keyword>
<keyword id="KW-0220">Diaminopimelate biosynthesis</keyword>
<keyword id="KW-0378">Hydrolase</keyword>
<keyword id="KW-0457">Lysine biosynthesis</keyword>
<keyword id="KW-0479">Metal-binding</keyword>
<keyword id="KW-1185">Reference proteome</keyword>
<keyword id="KW-0862">Zinc</keyword>
<gene>
    <name evidence="1" type="primary">dapE</name>
    <name type="ordered locus">HPG27_194</name>
</gene>
<organism>
    <name type="scientific">Helicobacter pylori (strain G27)</name>
    <dbReference type="NCBI Taxonomy" id="563041"/>
    <lineage>
        <taxon>Bacteria</taxon>
        <taxon>Pseudomonadati</taxon>
        <taxon>Campylobacterota</taxon>
        <taxon>Epsilonproteobacteria</taxon>
        <taxon>Campylobacterales</taxon>
        <taxon>Helicobacteraceae</taxon>
        <taxon>Helicobacter</taxon>
    </lineage>
</organism>
<accession>B5Z9Y1</accession>
<protein>
    <recommendedName>
        <fullName evidence="1">Succinyl-diaminopimelate desuccinylase</fullName>
        <shortName evidence="1">SDAP desuccinylase</shortName>
        <ecNumber evidence="1">3.5.1.18</ecNumber>
    </recommendedName>
    <alternativeName>
        <fullName evidence="1">N-succinyl-LL-2,6-diaminoheptanedioate amidohydrolase</fullName>
    </alternativeName>
</protein>
<proteinExistence type="inferred from homology"/>
<name>DAPE_HELPG</name>